<keyword id="KW-0269">Exonuclease</keyword>
<keyword id="KW-0378">Hydrolase</keyword>
<keyword id="KW-0540">Nuclease</keyword>
<feature type="chain" id="PRO_1000215269" description="3'-5' exoribonuclease YhaM">
    <location>
        <begin position="1"/>
        <end position="313"/>
    </location>
</feature>
<feature type="domain" description="HD" evidence="2">
    <location>
        <begin position="163"/>
        <end position="279"/>
    </location>
</feature>
<proteinExistence type="inferred from homology"/>
<name>YHAM_LISMC</name>
<reference key="1">
    <citation type="journal article" date="2012" name="BMC Genomics">
        <title>Comparative genomics and transcriptomics of lineages I, II, and III strains of Listeria monocytogenes.</title>
        <authorList>
            <person name="Hain T."/>
            <person name="Ghai R."/>
            <person name="Billion A."/>
            <person name="Kuenne C.T."/>
            <person name="Steinweg C."/>
            <person name="Izar B."/>
            <person name="Mohamed W."/>
            <person name="Mraheil M."/>
            <person name="Domann E."/>
            <person name="Schaffrath S."/>
            <person name="Karst U."/>
            <person name="Goesmann A."/>
            <person name="Oehm S."/>
            <person name="Puhler A."/>
            <person name="Merkl R."/>
            <person name="Vorwerk S."/>
            <person name="Glaser P."/>
            <person name="Garrido P."/>
            <person name="Rusniok C."/>
            <person name="Buchrieser C."/>
            <person name="Goebel W."/>
            <person name="Chakraborty T."/>
        </authorList>
    </citation>
    <scope>NUCLEOTIDE SEQUENCE [LARGE SCALE GENOMIC DNA]</scope>
    <source>
        <strain>CLIP80459</strain>
    </source>
</reference>
<comment type="function">
    <text evidence="1">Shows a 3'-5' exoribonuclease activity.</text>
</comment>
<comment type="similarity">
    <text evidence="1">Belongs to the YhaM family.</text>
</comment>
<protein>
    <recommendedName>
        <fullName evidence="1">3'-5' exoribonuclease YhaM</fullName>
        <ecNumber evidence="1">3.1.-.-</ecNumber>
    </recommendedName>
</protein>
<evidence type="ECO:0000255" key="1">
    <source>
        <dbReference type="HAMAP-Rule" id="MF_01427"/>
    </source>
</evidence>
<evidence type="ECO:0000255" key="2">
    <source>
        <dbReference type="PROSITE-ProRule" id="PRU01175"/>
    </source>
</evidence>
<sequence length="313" mass="35369">MEKRLLDFEVGETVDLFLLIKSSVKGTASNGKPFLSLVLQDKSGELEAKLWDVKESDEANYGVQQIVHLMGDIQNYRGRKQLKIRQIRQATALDGVSASEFMETAPINKEEMADEITQYIFEMKNANLQRITRALLKKYQDDFYDYPAAMRHHHEFVSGLSFHVVSMLRLAKSVADLYPSVNRDLLYAGVILHDLGKVIELSGPVSTTYTLEGNLIGHISIVVEEVSKIADELSIDGEEVVVLKHVLLSHHGKGEWGSPKPPLVREAEILHQIDLMDASLNMMDKVLKHTKPGEFSERVFGLDNRSFYNPIFE</sequence>
<gene>
    <name evidence="1" type="primary">yhaM</name>
    <name type="ordered locus">Lm4b_02247</name>
</gene>
<organism>
    <name type="scientific">Listeria monocytogenes serotype 4b (strain CLIP80459)</name>
    <dbReference type="NCBI Taxonomy" id="568819"/>
    <lineage>
        <taxon>Bacteria</taxon>
        <taxon>Bacillati</taxon>
        <taxon>Bacillota</taxon>
        <taxon>Bacilli</taxon>
        <taxon>Bacillales</taxon>
        <taxon>Listeriaceae</taxon>
        <taxon>Listeria</taxon>
    </lineage>
</organism>
<accession>C1KXH5</accession>
<dbReference type="EC" id="3.1.-.-" evidence="1"/>
<dbReference type="EMBL" id="FM242711">
    <property type="protein sequence ID" value="CAS06004.1"/>
    <property type="molecule type" value="Genomic_DNA"/>
</dbReference>
<dbReference type="RefSeq" id="WP_003726774.1">
    <property type="nucleotide sequence ID" value="NC_012488.1"/>
</dbReference>
<dbReference type="SMR" id="C1KXH5"/>
<dbReference type="KEGG" id="lmc:Lm4b_02247"/>
<dbReference type="HOGENOM" id="CLU_056349_2_0_9"/>
<dbReference type="GO" id="GO:0000175">
    <property type="term" value="F:3'-5'-RNA exonuclease activity"/>
    <property type="evidence" value="ECO:0007669"/>
    <property type="project" value="UniProtKB-UniRule"/>
</dbReference>
<dbReference type="GO" id="GO:0003676">
    <property type="term" value="F:nucleic acid binding"/>
    <property type="evidence" value="ECO:0007669"/>
    <property type="project" value="InterPro"/>
</dbReference>
<dbReference type="GO" id="GO:0031125">
    <property type="term" value="P:rRNA 3'-end processing"/>
    <property type="evidence" value="ECO:0007669"/>
    <property type="project" value="TreeGrafter"/>
</dbReference>
<dbReference type="CDD" id="cd00077">
    <property type="entry name" value="HDc"/>
    <property type="match status" value="1"/>
</dbReference>
<dbReference type="CDD" id="cd04492">
    <property type="entry name" value="YhaM_OBF_like"/>
    <property type="match status" value="1"/>
</dbReference>
<dbReference type="FunFam" id="1.10.3210.10:FF:000008">
    <property type="entry name" value="3'-5' exoribonuclease YhaM"/>
    <property type="match status" value="1"/>
</dbReference>
<dbReference type="Gene3D" id="1.10.3210.10">
    <property type="entry name" value="Hypothetical protein af1432"/>
    <property type="match status" value="1"/>
</dbReference>
<dbReference type="Gene3D" id="2.40.50.140">
    <property type="entry name" value="Nucleic acid-binding proteins"/>
    <property type="match status" value="1"/>
</dbReference>
<dbReference type="HAMAP" id="MF_01427">
    <property type="entry name" value="3_5_Exoribonuc_YhaM"/>
    <property type="match status" value="1"/>
</dbReference>
<dbReference type="InterPro" id="IPR020873">
    <property type="entry name" value="3'-5'_exoribonuclease_YhaM"/>
</dbReference>
<dbReference type="InterPro" id="IPR003607">
    <property type="entry name" value="HD/PDEase_dom"/>
</dbReference>
<dbReference type="InterPro" id="IPR006674">
    <property type="entry name" value="HD_domain"/>
</dbReference>
<dbReference type="InterPro" id="IPR012340">
    <property type="entry name" value="NA-bd_OB-fold"/>
</dbReference>
<dbReference type="InterPro" id="IPR004365">
    <property type="entry name" value="NA-bd_OB_tRNA"/>
</dbReference>
<dbReference type="InterPro" id="IPR050798">
    <property type="entry name" value="YhaM_exoribonuc/phosphodiest"/>
</dbReference>
<dbReference type="NCBIfam" id="NF010007">
    <property type="entry name" value="PRK13480.1"/>
    <property type="match status" value="1"/>
</dbReference>
<dbReference type="PANTHER" id="PTHR37294">
    <property type="entry name" value="3'-5' EXORIBONUCLEASE YHAM"/>
    <property type="match status" value="1"/>
</dbReference>
<dbReference type="PANTHER" id="PTHR37294:SF1">
    <property type="entry name" value="3'-5' EXORIBONUCLEASE YHAM"/>
    <property type="match status" value="1"/>
</dbReference>
<dbReference type="Pfam" id="PF01966">
    <property type="entry name" value="HD"/>
    <property type="match status" value="1"/>
</dbReference>
<dbReference type="Pfam" id="PF01336">
    <property type="entry name" value="tRNA_anti-codon"/>
    <property type="match status" value="1"/>
</dbReference>
<dbReference type="SUPFAM" id="SSF109604">
    <property type="entry name" value="HD-domain/PDEase-like"/>
    <property type="match status" value="1"/>
</dbReference>
<dbReference type="PROSITE" id="PS51831">
    <property type="entry name" value="HD"/>
    <property type="match status" value="1"/>
</dbReference>